<comment type="function">
    <text evidence="1">Thiolesterase that catalyzes the hydrolysis of S-D-lactoyl-glutathione to form glutathione and D-lactic acid.</text>
</comment>
<comment type="catalytic activity">
    <reaction evidence="1">
        <text>an S-(2-hydroxyacyl)glutathione + H2O = a 2-hydroxy carboxylate + glutathione + H(+)</text>
        <dbReference type="Rhea" id="RHEA:21864"/>
        <dbReference type="ChEBI" id="CHEBI:15377"/>
        <dbReference type="ChEBI" id="CHEBI:15378"/>
        <dbReference type="ChEBI" id="CHEBI:57925"/>
        <dbReference type="ChEBI" id="CHEBI:58896"/>
        <dbReference type="ChEBI" id="CHEBI:71261"/>
        <dbReference type="EC" id="3.1.2.6"/>
    </reaction>
</comment>
<comment type="cofactor">
    <cofactor evidence="1">
        <name>Zn(2+)</name>
        <dbReference type="ChEBI" id="CHEBI:29105"/>
    </cofactor>
    <text evidence="1">Binds 2 Zn(2+) ions per subunit.</text>
</comment>
<comment type="pathway">
    <text evidence="1">Secondary metabolite metabolism; methylglyoxal degradation; (R)-lactate from methylglyoxal: step 2/2.</text>
</comment>
<comment type="subunit">
    <text evidence="1">Monomer.</text>
</comment>
<comment type="similarity">
    <text evidence="1">Belongs to the metallo-beta-lactamase superfamily. Glyoxalase II family.</text>
</comment>
<dbReference type="EC" id="3.1.2.6" evidence="1"/>
<dbReference type="EMBL" id="X99599">
    <property type="protein sequence ID" value="CAA67905.1"/>
    <property type="molecule type" value="Genomic_DNA"/>
</dbReference>
<dbReference type="RefSeq" id="WP_013068676.1">
    <property type="nucleotide sequence ID" value="NZ_VIBE01000018.1"/>
</dbReference>
<dbReference type="SMR" id="P96981"/>
<dbReference type="GeneID" id="31491771"/>
<dbReference type="OMA" id="NYIWLLQ"/>
<dbReference type="UniPathway" id="UPA00619">
    <property type="reaction ID" value="UER00676"/>
</dbReference>
<dbReference type="GO" id="GO:0004416">
    <property type="term" value="F:hydroxyacylglutathione hydrolase activity"/>
    <property type="evidence" value="ECO:0007669"/>
    <property type="project" value="UniProtKB-UniRule"/>
</dbReference>
<dbReference type="GO" id="GO:0046872">
    <property type="term" value="F:metal ion binding"/>
    <property type="evidence" value="ECO:0007669"/>
    <property type="project" value="UniProtKB-KW"/>
</dbReference>
<dbReference type="GO" id="GO:0019243">
    <property type="term" value="P:methylglyoxal catabolic process to D-lactate via S-lactoyl-glutathione"/>
    <property type="evidence" value="ECO:0007669"/>
    <property type="project" value="InterPro"/>
</dbReference>
<dbReference type="CDD" id="cd07723">
    <property type="entry name" value="hydroxyacylglutathione_hydrolase_MBL-fold"/>
    <property type="match status" value="1"/>
</dbReference>
<dbReference type="Gene3D" id="3.60.15.10">
    <property type="entry name" value="Ribonuclease Z/Hydroxyacylglutathione hydrolase-like"/>
    <property type="match status" value="1"/>
</dbReference>
<dbReference type="HAMAP" id="MF_01374">
    <property type="entry name" value="Glyoxalase_2"/>
    <property type="match status" value="1"/>
</dbReference>
<dbReference type="InterPro" id="IPR035680">
    <property type="entry name" value="Clx_II_MBL"/>
</dbReference>
<dbReference type="InterPro" id="IPR050110">
    <property type="entry name" value="Glyoxalase_II_hydrolase"/>
</dbReference>
<dbReference type="InterPro" id="IPR032282">
    <property type="entry name" value="HAGH_C"/>
</dbReference>
<dbReference type="InterPro" id="IPR017782">
    <property type="entry name" value="Hydroxyacylglutathione_Hdrlase"/>
</dbReference>
<dbReference type="InterPro" id="IPR001279">
    <property type="entry name" value="Metallo-B-lactamas"/>
</dbReference>
<dbReference type="InterPro" id="IPR036866">
    <property type="entry name" value="RibonucZ/Hydroxyglut_hydro"/>
</dbReference>
<dbReference type="NCBIfam" id="TIGR03413">
    <property type="entry name" value="GSH_gloB"/>
    <property type="match status" value="1"/>
</dbReference>
<dbReference type="PANTHER" id="PTHR43705">
    <property type="entry name" value="HYDROXYACYLGLUTATHIONE HYDROLASE"/>
    <property type="match status" value="1"/>
</dbReference>
<dbReference type="PANTHER" id="PTHR43705:SF1">
    <property type="entry name" value="HYDROXYACYLGLUTATHIONE HYDROLASE GLOB"/>
    <property type="match status" value="1"/>
</dbReference>
<dbReference type="Pfam" id="PF16123">
    <property type="entry name" value="HAGH_C"/>
    <property type="match status" value="1"/>
</dbReference>
<dbReference type="Pfam" id="PF00753">
    <property type="entry name" value="Lactamase_B"/>
    <property type="match status" value="1"/>
</dbReference>
<dbReference type="PIRSF" id="PIRSF005457">
    <property type="entry name" value="Glx"/>
    <property type="match status" value="1"/>
</dbReference>
<dbReference type="SMART" id="SM00849">
    <property type="entry name" value="Lactamase_B"/>
    <property type="match status" value="1"/>
</dbReference>
<dbReference type="SUPFAM" id="SSF56281">
    <property type="entry name" value="Metallo-hydrolase/oxidoreductase"/>
    <property type="match status" value="1"/>
</dbReference>
<gene>
    <name evidence="1" type="primary">gloB</name>
</gene>
<feature type="chain" id="PRO_0000192355" description="Hydroxyacylglutathione hydrolase">
    <location>
        <begin position="1"/>
        <end position="256"/>
    </location>
</feature>
<feature type="binding site" evidence="1">
    <location>
        <position position="56"/>
    </location>
    <ligand>
        <name>Zn(2+)</name>
        <dbReference type="ChEBI" id="CHEBI:29105"/>
        <label>1</label>
    </ligand>
</feature>
<feature type="binding site" evidence="1">
    <location>
        <position position="58"/>
    </location>
    <ligand>
        <name>Zn(2+)</name>
        <dbReference type="ChEBI" id="CHEBI:29105"/>
        <label>1</label>
    </ligand>
</feature>
<feature type="binding site" evidence="1">
    <location>
        <position position="60"/>
    </location>
    <ligand>
        <name>Zn(2+)</name>
        <dbReference type="ChEBI" id="CHEBI:29105"/>
        <label>2</label>
    </ligand>
</feature>
<feature type="binding site" evidence="1">
    <location>
        <position position="61"/>
    </location>
    <ligand>
        <name>Zn(2+)</name>
        <dbReference type="ChEBI" id="CHEBI:29105"/>
        <label>2</label>
    </ligand>
</feature>
<feature type="binding site" evidence="1">
    <location>
        <position position="114"/>
    </location>
    <ligand>
        <name>Zn(2+)</name>
        <dbReference type="ChEBI" id="CHEBI:29105"/>
        <label>1</label>
    </ligand>
</feature>
<feature type="binding site" evidence="1">
    <location>
        <position position="133"/>
    </location>
    <ligand>
        <name>Zn(2+)</name>
        <dbReference type="ChEBI" id="CHEBI:29105"/>
        <label>1</label>
    </ligand>
</feature>
<feature type="binding site" evidence="1">
    <location>
        <position position="133"/>
    </location>
    <ligand>
        <name>Zn(2+)</name>
        <dbReference type="ChEBI" id="CHEBI:29105"/>
        <label>2</label>
    </ligand>
</feature>
<feature type="binding site" evidence="1">
    <location>
        <position position="171"/>
    </location>
    <ligand>
        <name>Zn(2+)</name>
        <dbReference type="ChEBI" id="CHEBI:29105"/>
        <label>2</label>
    </ligand>
</feature>
<reference key="1">
    <citation type="journal article" date="1998" name="J. Bacteriol.">
        <title>The ATP synthase atpHAGDC (F1) operon from Rhodobacter capsulatus.</title>
        <authorList>
            <person name="Borghese R."/>
            <person name="Crimi M."/>
            <person name="Fava L."/>
            <person name="Melandri B.A."/>
        </authorList>
    </citation>
    <scope>NUCLEOTIDE SEQUENCE [GENOMIC DNA]</scope>
    <source>
        <strain>ATCC 33303 / B10</strain>
    </source>
</reference>
<keyword id="KW-0378">Hydrolase</keyword>
<keyword id="KW-0479">Metal-binding</keyword>
<keyword id="KW-0862">Zinc</keyword>
<sequence>MTLELTPIPCLTDNYAWLWHDTATDTVVVVDVPEAAPVLKVLTDRRWQLHHILITHHHADHIAGVEALAQATGAKVAGAAADAHRLPPLDHPVAPGDVLHLGMEAAQVIAADGHTLGHIAWYLPGAGLLFSGDSLMSWGCGRLFEGTPAQMFDTLTRLAALPPETRVCSGHEYTAANGRFALSLEPGNGRLHDRMDRVTALRLAGEPSLPVTLGEERATNPFLRADDAALRAALGLPGDAAPLAVFTAARARKDRF</sequence>
<organism>
    <name type="scientific">Rhodobacter capsulatus</name>
    <name type="common">Rhodopseudomonas capsulata</name>
    <dbReference type="NCBI Taxonomy" id="1061"/>
    <lineage>
        <taxon>Bacteria</taxon>
        <taxon>Pseudomonadati</taxon>
        <taxon>Pseudomonadota</taxon>
        <taxon>Alphaproteobacteria</taxon>
        <taxon>Rhodobacterales</taxon>
        <taxon>Rhodobacter group</taxon>
        <taxon>Rhodobacter</taxon>
    </lineage>
</organism>
<proteinExistence type="inferred from homology"/>
<accession>P96981</accession>
<name>GLO2_RHOCA</name>
<evidence type="ECO:0000255" key="1">
    <source>
        <dbReference type="HAMAP-Rule" id="MF_01374"/>
    </source>
</evidence>
<protein>
    <recommendedName>
        <fullName evidence="1">Hydroxyacylglutathione hydrolase</fullName>
        <ecNumber evidence="1">3.1.2.6</ecNumber>
    </recommendedName>
    <alternativeName>
        <fullName evidence="1">Glyoxalase II</fullName>
        <shortName evidence="1">Glx II</shortName>
    </alternativeName>
</protein>